<keyword id="KW-0007">Acetylation</keyword>
<keyword id="KW-0106">Calcium</keyword>
<keyword id="KW-0479">Metal-binding</keyword>
<keyword id="KW-0488">Methylation</keyword>
<keyword id="KW-0677">Repeat</keyword>
<evidence type="ECO:0000250" key="1"/>
<evidence type="ECO:0000255" key="2">
    <source>
        <dbReference type="PROSITE-ProRule" id="PRU00448"/>
    </source>
</evidence>
<evidence type="ECO:0000305" key="3"/>
<dbReference type="EMBL" id="Y18166">
    <property type="protein sequence ID" value="CAA77069.1"/>
    <property type="molecule type" value="mRNA"/>
</dbReference>
<dbReference type="SMR" id="O97341"/>
<dbReference type="GO" id="GO:0016460">
    <property type="term" value="C:myosin II complex"/>
    <property type="evidence" value="ECO:0007669"/>
    <property type="project" value="TreeGrafter"/>
</dbReference>
<dbReference type="GO" id="GO:0005509">
    <property type="term" value="F:calcium ion binding"/>
    <property type="evidence" value="ECO:0007669"/>
    <property type="project" value="InterPro"/>
</dbReference>
<dbReference type="CDD" id="cd00051">
    <property type="entry name" value="EFh"/>
    <property type="match status" value="2"/>
</dbReference>
<dbReference type="FunFam" id="1.10.238.10:FF:000527">
    <property type="entry name" value="Calmodulin-3"/>
    <property type="match status" value="1"/>
</dbReference>
<dbReference type="Gene3D" id="1.10.238.10">
    <property type="entry name" value="EF-hand"/>
    <property type="match status" value="3"/>
</dbReference>
<dbReference type="InterPro" id="IPR050230">
    <property type="entry name" value="CALM/Myosin/TropC-like"/>
</dbReference>
<dbReference type="InterPro" id="IPR011992">
    <property type="entry name" value="EF-hand-dom_pair"/>
</dbReference>
<dbReference type="InterPro" id="IPR018247">
    <property type="entry name" value="EF_Hand_1_Ca_BS"/>
</dbReference>
<dbReference type="InterPro" id="IPR002048">
    <property type="entry name" value="EF_hand_dom"/>
</dbReference>
<dbReference type="PANTHER" id="PTHR23048:SF0">
    <property type="entry name" value="CALMODULIN LIKE 3"/>
    <property type="match status" value="1"/>
</dbReference>
<dbReference type="PANTHER" id="PTHR23048">
    <property type="entry name" value="MYOSIN LIGHT CHAIN 1, 3"/>
    <property type="match status" value="1"/>
</dbReference>
<dbReference type="Pfam" id="PF13499">
    <property type="entry name" value="EF-hand_7"/>
    <property type="match status" value="2"/>
</dbReference>
<dbReference type="PRINTS" id="PR00450">
    <property type="entry name" value="RECOVERIN"/>
</dbReference>
<dbReference type="SMART" id="SM00054">
    <property type="entry name" value="EFh"/>
    <property type="match status" value="4"/>
</dbReference>
<dbReference type="SUPFAM" id="SSF47473">
    <property type="entry name" value="EF-hand"/>
    <property type="match status" value="1"/>
</dbReference>
<dbReference type="PROSITE" id="PS00018">
    <property type="entry name" value="EF_HAND_1"/>
    <property type="match status" value="4"/>
</dbReference>
<dbReference type="PROSITE" id="PS50222">
    <property type="entry name" value="EF_HAND_2"/>
    <property type="match status" value="4"/>
</dbReference>
<proteinExistence type="evidence at transcript level"/>
<protein>
    <recommendedName>
        <fullName>Calmodulin</fullName>
        <shortName>CaM</shortName>
    </recommendedName>
</protein>
<sequence>MADQLTEEQIAEFKEAFSLFDKDGDGTITTKELGTVMRSLGQNPTEAELQDMINEVDTDGNGTIDFPEFLTMMARKMKETDSEEEIREAFRVFDKDGNGFISAAELRHVMTNLGEKLTDEEVDEMIREADTDGDGQVNYEEFVGMMTSK</sequence>
<feature type="initiator methionine" description="Removed" evidence="1">
    <location>
        <position position="1"/>
    </location>
</feature>
<feature type="chain" id="PRO_0000198270" description="Calmodulin">
    <location>
        <begin position="2"/>
        <end position="149"/>
    </location>
</feature>
<feature type="domain" description="EF-hand 1" evidence="2">
    <location>
        <begin position="8"/>
        <end position="43"/>
    </location>
</feature>
<feature type="domain" description="EF-hand 2" evidence="2">
    <location>
        <begin position="44"/>
        <end position="79"/>
    </location>
</feature>
<feature type="domain" description="EF-hand 3" evidence="2">
    <location>
        <begin position="81"/>
        <end position="116"/>
    </location>
</feature>
<feature type="domain" description="EF-hand 4" evidence="2">
    <location>
        <begin position="117"/>
        <end position="149"/>
    </location>
</feature>
<feature type="binding site" evidence="2">
    <location>
        <position position="21"/>
    </location>
    <ligand>
        <name>Ca(2+)</name>
        <dbReference type="ChEBI" id="CHEBI:29108"/>
        <label>1</label>
    </ligand>
</feature>
<feature type="binding site" evidence="2">
    <location>
        <position position="23"/>
    </location>
    <ligand>
        <name>Ca(2+)</name>
        <dbReference type="ChEBI" id="CHEBI:29108"/>
        <label>1</label>
    </ligand>
</feature>
<feature type="binding site" evidence="2">
    <location>
        <position position="25"/>
    </location>
    <ligand>
        <name>Ca(2+)</name>
        <dbReference type="ChEBI" id="CHEBI:29108"/>
        <label>1</label>
    </ligand>
</feature>
<feature type="binding site" evidence="2">
    <location>
        <position position="27"/>
    </location>
    <ligand>
        <name>Ca(2+)</name>
        <dbReference type="ChEBI" id="CHEBI:29108"/>
        <label>1</label>
    </ligand>
</feature>
<feature type="binding site" evidence="2">
    <location>
        <position position="32"/>
    </location>
    <ligand>
        <name>Ca(2+)</name>
        <dbReference type="ChEBI" id="CHEBI:29108"/>
        <label>1</label>
    </ligand>
</feature>
<feature type="binding site" evidence="2">
    <location>
        <position position="57"/>
    </location>
    <ligand>
        <name>Ca(2+)</name>
        <dbReference type="ChEBI" id="CHEBI:29108"/>
        <label>2</label>
    </ligand>
</feature>
<feature type="binding site" evidence="2">
    <location>
        <position position="59"/>
    </location>
    <ligand>
        <name>Ca(2+)</name>
        <dbReference type="ChEBI" id="CHEBI:29108"/>
        <label>2</label>
    </ligand>
</feature>
<feature type="binding site" evidence="2">
    <location>
        <position position="61"/>
    </location>
    <ligand>
        <name>Ca(2+)</name>
        <dbReference type="ChEBI" id="CHEBI:29108"/>
        <label>2</label>
    </ligand>
</feature>
<feature type="binding site" evidence="2">
    <location>
        <position position="63"/>
    </location>
    <ligand>
        <name>Ca(2+)</name>
        <dbReference type="ChEBI" id="CHEBI:29108"/>
        <label>2</label>
    </ligand>
</feature>
<feature type="binding site" evidence="2">
    <location>
        <position position="68"/>
    </location>
    <ligand>
        <name>Ca(2+)</name>
        <dbReference type="ChEBI" id="CHEBI:29108"/>
        <label>2</label>
    </ligand>
</feature>
<feature type="binding site" evidence="2">
    <location>
        <position position="94"/>
    </location>
    <ligand>
        <name>Ca(2+)</name>
        <dbReference type="ChEBI" id="CHEBI:29108"/>
        <label>3</label>
    </ligand>
</feature>
<feature type="binding site" evidence="2">
    <location>
        <position position="96"/>
    </location>
    <ligand>
        <name>Ca(2+)</name>
        <dbReference type="ChEBI" id="CHEBI:29108"/>
        <label>3</label>
    </ligand>
</feature>
<feature type="binding site" evidence="2">
    <location>
        <position position="98"/>
    </location>
    <ligand>
        <name>Ca(2+)</name>
        <dbReference type="ChEBI" id="CHEBI:29108"/>
        <label>3</label>
    </ligand>
</feature>
<feature type="binding site" evidence="2">
    <location>
        <position position="105"/>
    </location>
    <ligand>
        <name>Ca(2+)</name>
        <dbReference type="ChEBI" id="CHEBI:29108"/>
        <label>3</label>
    </ligand>
</feature>
<feature type="binding site" evidence="2">
    <location>
        <position position="130"/>
    </location>
    <ligand>
        <name>Ca(2+)</name>
        <dbReference type="ChEBI" id="CHEBI:29108"/>
        <label>4</label>
    </ligand>
</feature>
<feature type="binding site" evidence="2">
    <location>
        <position position="132"/>
    </location>
    <ligand>
        <name>Ca(2+)</name>
        <dbReference type="ChEBI" id="CHEBI:29108"/>
        <label>4</label>
    </ligand>
</feature>
<feature type="binding site" evidence="2">
    <location>
        <position position="134"/>
    </location>
    <ligand>
        <name>Ca(2+)</name>
        <dbReference type="ChEBI" id="CHEBI:29108"/>
        <label>4</label>
    </ligand>
</feature>
<feature type="binding site" evidence="2">
    <location>
        <position position="136"/>
    </location>
    <ligand>
        <name>Ca(2+)</name>
        <dbReference type="ChEBI" id="CHEBI:29108"/>
        <label>4</label>
    </ligand>
</feature>
<feature type="binding site" evidence="2">
    <location>
        <position position="141"/>
    </location>
    <ligand>
        <name>Ca(2+)</name>
        <dbReference type="ChEBI" id="CHEBI:29108"/>
        <label>4</label>
    </ligand>
</feature>
<feature type="modified residue" description="N-acetylalanine" evidence="1">
    <location>
        <position position="2"/>
    </location>
</feature>
<feature type="modified residue" description="N6,N6,N6-trimethyllysine" evidence="1">
    <location>
        <position position="116"/>
    </location>
</feature>
<reference key="1">
    <citation type="journal article" date="1999" name="Proc. R. Soc. B">
        <title>Evolutionary relationships of Metazoa within the eukaryotes based on molecular data from Porifera.</title>
        <authorList>
            <person name="Schuetze J."/>
            <person name="Krasko A."/>
            <person name="Custodio M.R."/>
            <person name="Efremova S.M."/>
            <person name="Muller I.M."/>
            <person name="Mueller W.E.G."/>
        </authorList>
    </citation>
    <scope>NUCLEOTIDE SEQUENCE [MRNA]</scope>
</reference>
<organism>
    <name type="scientific">Suberites domuncula</name>
    <name type="common">Sponge</name>
    <dbReference type="NCBI Taxonomy" id="55567"/>
    <lineage>
        <taxon>Eukaryota</taxon>
        <taxon>Metazoa</taxon>
        <taxon>Porifera</taxon>
        <taxon>Demospongiae</taxon>
        <taxon>Heteroscleromorpha</taxon>
        <taxon>Suberitida</taxon>
        <taxon>Suberitidae</taxon>
        <taxon>Suberites</taxon>
    </lineage>
</organism>
<accession>O97341</accession>
<comment type="function">
    <text>Calmodulin mediates the control of a large number of enzymes, ion channels and other proteins by Ca(2+). Among the enzymes to be stimulated by the calmodulin-Ca(2+) complex are a number of protein kinases and phosphatases.</text>
</comment>
<comment type="miscellaneous">
    <text>This protein has four functional calcium-binding sites.</text>
</comment>
<comment type="similarity">
    <text evidence="3">Belongs to the calmodulin family.</text>
</comment>
<name>CALM_SUBDO</name>